<name>SYS_THEVO</name>
<dbReference type="EC" id="6.1.1.11" evidence="1"/>
<dbReference type="EMBL" id="BA000011">
    <property type="protein sequence ID" value="BAB60159.1"/>
    <property type="molecule type" value="Genomic_DNA"/>
</dbReference>
<dbReference type="RefSeq" id="WP_010917245.1">
    <property type="nucleotide sequence ID" value="NC_002689.2"/>
</dbReference>
<dbReference type="SMR" id="Q979Z3"/>
<dbReference type="STRING" id="273116.gene:9381810"/>
<dbReference type="PaxDb" id="273116-14325255"/>
<dbReference type="GeneID" id="1441127"/>
<dbReference type="KEGG" id="tvo:TVG1039759"/>
<dbReference type="eggNOG" id="arCOG00403">
    <property type="taxonomic scope" value="Archaea"/>
</dbReference>
<dbReference type="HOGENOM" id="CLU_023797_0_1_2"/>
<dbReference type="OrthoDB" id="35932at2157"/>
<dbReference type="PhylomeDB" id="Q979Z3"/>
<dbReference type="UniPathway" id="UPA00906">
    <property type="reaction ID" value="UER00895"/>
</dbReference>
<dbReference type="Proteomes" id="UP000001017">
    <property type="component" value="Chromosome"/>
</dbReference>
<dbReference type="GO" id="GO:0005737">
    <property type="term" value="C:cytoplasm"/>
    <property type="evidence" value="ECO:0007669"/>
    <property type="project" value="UniProtKB-SubCell"/>
</dbReference>
<dbReference type="GO" id="GO:0005524">
    <property type="term" value="F:ATP binding"/>
    <property type="evidence" value="ECO:0007669"/>
    <property type="project" value="UniProtKB-UniRule"/>
</dbReference>
<dbReference type="GO" id="GO:0004828">
    <property type="term" value="F:serine-tRNA ligase activity"/>
    <property type="evidence" value="ECO:0007669"/>
    <property type="project" value="UniProtKB-UniRule"/>
</dbReference>
<dbReference type="GO" id="GO:0016260">
    <property type="term" value="P:selenocysteine biosynthetic process"/>
    <property type="evidence" value="ECO:0007669"/>
    <property type="project" value="UniProtKB-UniRule"/>
</dbReference>
<dbReference type="GO" id="GO:0006434">
    <property type="term" value="P:seryl-tRNA aminoacylation"/>
    <property type="evidence" value="ECO:0007669"/>
    <property type="project" value="UniProtKB-UniRule"/>
</dbReference>
<dbReference type="CDD" id="cd00770">
    <property type="entry name" value="SerRS_core"/>
    <property type="match status" value="1"/>
</dbReference>
<dbReference type="Gene3D" id="3.30.930.10">
    <property type="entry name" value="Bira Bifunctional Protein, Domain 2"/>
    <property type="match status" value="1"/>
</dbReference>
<dbReference type="Gene3D" id="1.10.287.40">
    <property type="entry name" value="Serine-tRNA synthetase, tRNA binding domain"/>
    <property type="match status" value="1"/>
</dbReference>
<dbReference type="HAMAP" id="MF_00176">
    <property type="entry name" value="Ser_tRNA_synth_type1"/>
    <property type="match status" value="1"/>
</dbReference>
<dbReference type="InterPro" id="IPR002314">
    <property type="entry name" value="aa-tRNA-synt_IIb"/>
</dbReference>
<dbReference type="InterPro" id="IPR006195">
    <property type="entry name" value="aa-tRNA-synth_II"/>
</dbReference>
<dbReference type="InterPro" id="IPR045864">
    <property type="entry name" value="aa-tRNA-synth_II/BPL/LPL"/>
</dbReference>
<dbReference type="InterPro" id="IPR002317">
    <property type="entry name" value="Ser-tRNA-ligase_type_1"/>
</dbReference>
<dbReference type="InterPro" id="IPR015866">
    <property type="entry name" value="Ser-tRNA-synth_1_N"/>
</dbReference>
<dbReference type="InterPro" id="IPR042103">
    <property type="entry name" value="SerRS_1_N_sf"/>
</dbReference>
<dbReference type="InterPro" id="IPR033729">
    <property type="entry name" value="SerRS_core"/>
</dbReference>
<dbReference type="InterPro" id="IPR010978">
    <property type="entry name" value="tRNA-bd_arm"/>
</dbReference>
<dbReference type="NCBIfam" id="TIGR00414">
    <property type="entry name" value="serS"/>
    <property type="match status" value="1"/>
</dbReference>
<dbReference type="PANTHER" id="PTHR11778">
    <property type="entry name" value="SERYL-TRNA SYNTHETASE"/>
    <property type="match status" value="1"/>
</dbReference>
<dbReference type="Pfam" id="PF02403">
    <property type="entry name" value="Seryl_tRNA_N"/>
    <property type="match status" value="1"/>
</dbReference>
<dbReference type="Pfam" id="PF00587">
    <property type="entry name" value="tRNA-synt_2b"/>
    <property type="match status" value="1"/>
</dbReference>
<dbReference type="PIRSF" id="PIRSF001529">
    <property type="entry name" value="Ser-tRNA-synth_IIa"/>
    <property type="match status" value="1"/>
</dbReference>
<dbReference type="PRINTS" id="PR00981">
    <property type="entry name" value="TRNASYNTHSER"/>
</dbReference>
<dbReference type="SUPFAM" id="SSF55681">
    <property type="entry name" value="Class II aaRS and biotin synthetases"/>
    <property type="match status" value="1"/>
</dbReference>
<dbReference type="SUPFAM" id="SSF46589">
    <property type="entry name" value="tRNA-binding arm"/>
    <property type="match status" value="1"/>
</dbReference>
<dbReference type="PROSITE" id="PS50862">
    <property type="entry name" value="AA_TRNA_LIGASE_II"/>
    <property type="match status" value="1"/>
</dbReference>
<sequence>MIDVKLLRSNRELFEKNCEYRGVDKAIIDQFFKLDEEWRSVNRELNGQRAEKNRMTRAIAESLKRGKIVSNEKDRVELINEKIVSLEKKIREIEEERDRVLWTIPNLIHESVPICFGDENNKIVRYVGHAKVYRDDEEEFLKGSGGNGDYEVIDERPKSHVDLGQELGIIDLESAAKISGARFYFIKNRLLKLEMALENYAVDFLSQRGFTVVEPPYMLNLESMRGATDLETFKDTLYKIEDEDLYLIATSEHSIASMLSNEFLEEKELPIRVAGVSACFRREAGAHGKDTKGIFRVHQFNKIEQFIFCKPEDSWDYLEEILSNAEEIYRSLGIPYRVVNVCSGELGRLAAKKYDIEAWFPAQGKFREIVSASNDTDYQARSLNIKYRKSGGNEFVHTLNSTAIATTRILVAIMENFQEDGRIRIPDVLVPYTGFQYIDKE</sequence>
<protein>
    <recommendedName>
        <fullName evidence="1">Serine--tRNA ligase</fullName>
        <ecNumber evidence="1">6.1.1.11</ecNumber>
    </recommendedName>
    <alternativeName>
        <fullName evidence="1">Seryl-tRNA synthetase</fullName>
        <shortName evidence="1">SerRS</shortName>
    </alternativeName>
    <alternativeName>
        <fullName evidence="1">Seryl-tRNA(Ser/Sec) synthetase</fullName>
    </alternativeName>
</protein>
<comment type="function">
    <text evidence="1">Catalyzes the attachment of serine to tRNA(Ser). Is also able to aminoacylate tRNA(Sec) with serine, to form the misacylated tRNA L-seryl-tRNA(Sec), which will be further converted into selenocysteinyl-tRNA(Sec).</text>
</comment>
<comment type="catalytic activity">
    <reaction evidence="1">
        <text>tRNA(Ser) + L-serine + ATP = L-seryl-tRNA(Ser) + AMP + diphosphate + H(+)</text>
        <dbReference type="Rhea" id="RHEA:12292"/>
        <dbReference type="Rhea" id="RHEA-COMP:9669"/>
        <dbReference type="Rhea" id="RHEA-COMP:9703"/>
        <dbReference type="ChEBI" id="CHEBI:15378"/>
        <dbReference type="ChEBI" id="CHEBI:30616"/>
        <dbReference type="ChEBI" id="CHEBI:33019"/>
        <dbReference type="ChEBI" id="CHEBI:33384"/>
        <dbReference type="ChEBI" id="CHEBI:78442"/>
        <dbReference type="ChEBI" id="CHEBI:78533"/>
        <dbReference type="ChEBI" id="CHEBI:456215"/>
        <dbReference type="EC" id="6.1.1.11"/>
    </reaction>
</comment>
<comment type="catalytic activity">
    <reaction evidence="1">
        <text>tRNA(Sec) + L-serine + ATP = L-seryl-tRNA(Sec) + AMP + diphosphate + H(+)</text>
        <dbReference type="Rhea" id="RHEA:42580"/>
        <dbReference type="Rhea" id="RHEA-COMP:9742"/>
        <dbReference type="Rhea" id="RHEA-COMP:10128"/>
        <dbReference type="ChEBI" id="CHEBI:15378"/>
        <dbReference type="ChEBI" id="CHEBI:30616"/>
        <dbReference type="ChEBI" id="CHEBI:33019"/>
        <dbReference type="ChEBI" id="CHEBI:33384"/>
        <dbReference type="ChEBI" id="CHEBI:78442"/>
        <dbReference type="ChEBI" id="CHEBI:78533"/>
        <dbReference type="ChEBI" id="CHEBI:456215"/>
        <dbReference type="EC" id="6.1.1.11"/>
    </reaction>
</comment>
<comment type="pathway">
    <text evidence="1">Aminoacyl-tRNA biosynthesis; selenocysteinyl-tRNA(Sec) biosynthesis; L-seryl-tRNA(Sec) from L-serine and tRNA(Sec): step 1/1.</text>
</comment>
<comment type="subunit">
    <text evidence="1">Homodimer. The tRNA molecule binds across the dimer.</text>
</comment>
<comment type="subcellular location">
    <subcellularLocation>
        <location evidence="1">Cytoplasm</location>
    </subcellularLocation>
</comment>
<comment type="domain">
    <text evidence="1">Consists of two distinct domains, a catalytic core and a N-terminal extension that is involved in tRNA binding.</text>
</comment>
<comment type="similarity">
    <text evidence="1">Belongs to the class-II aminoacyl-tRNA synthetase family. Type-1 seryl-tRNA synthetase subfamily.</text>
</comment>
<keyword id="KW-0030">Aminoacyl-tRNA synthetase</keyword>
<keyword id="KW-0067">ATP-binding</keyword>
<keyword id="KW-0963">Cytoplasm</keyword>
<keyword id="KW-0436">Ligase</keyword>
<keyword id="KW-0547">Nucleotide-binding</keyword>
<keyword id="KW-0648">Protein biosynthesis</keyword>
<accession>Q979Z3</accession>
<proteinExistence type="inferred from homology"/>
<evidence type="ECO:0000255" key="1">
    <source>
        <dbReference type="HAMAP-Rule" id="MF_00176"/>
    </source>
</evidence>
<organism>
    <name type="scientific">Thermoplasma volcanium (strain ATCC 51530 / DSM 4299 / JCM 9571 / NBRC 15438 / GSS1)</name>
    <dbReference type="NCBI Taxonomy" id="273116"/>
    <lineage>
        <taxon>Archaea</taxon>
        <taxon>Methanobacteriati</taxon>
        <taxon>Thermoplasmatota</taxon>
        <taxon>Thermoplasmata</taxon>
        <taxon>Thermoplasmatales</taxon>
        <taxon>Thermoplasmataceae</taxon>
        <taxon>Thermoplasma</taxon>
    </lineage>
</organism>
<feature type="chain" id="PRO_0000122188" description="Serine--tRNA ligase">
    <location>
        <begin position="1"/>
        <end position="441"/>
    </location>
</feature>
<feature type="binding site" evidence="1">
    <location>
        <begin position="250"/>
        <end position="252"/>
    </location>
    <ligand>
        <name>L-serine</name>
        <dbReference type="ChEBI" id="CHEBI:33384"/>
    </ligand>
</feature>
<feature type="binding site" evidence="1">
    <location>
        <begin position="281"/>
        <end position="283"/>
    </location>
    <ligand>
        <name>ATP</name>
        <dbReference type="ChEBI" id="CHEBI:30616"/>
    </ligand>
</feature>
<feature type="binding site" evidence="1">
    <location>
        <position position="297"/>
    </location>
    <ligand>
        <name>ATP</name>
        <dbReference type="ChEBI" id="CHEBI:30616"/>
    </ligand>
</feature>
<feature type="binding site" evidence="1">
    <location>
        <position position="304"/>
    </location>
    <ligand>
        <name>L-serine</name>
        <dbReference type="ChEBI" id="CHEBI:33384"/>
    </ligand>
</feature>
<feature type="binding site" evidence="1">
    <location>
        <begin position="368"/>
        <end position="371"/>
    </location>
    <ligand>
        <name>ATP</name>
        <dbReference type="ChEBI" id="CHEBI:30616"/>
    </ligand>
</feature>
<feature type="binding site" evidence="1">
    <location>
        <position position="402"/>
    </location>
    <ligand>
        <name>L-serine</name>
        <dbReference type="ChEBI" id="CHEBI:33384"/>
    </ligand>
</feature>
<reference key="1">
    <citation type="journal article" date="2000" name="Proc. Natl. Acad. Sci. U.S.A.">
        <title>Archaeal adaptation to higher temperatures revealed by genomic sequence of Thermoplasma volcanium.</title>
        <authorList>
            <person name="Kawashima T."/>
            <person name="Amano N."/>
            <person name="Koike H."/>
            <person name="Makino S."/>
            <person name="Higuchi S."/>
            <person name="Kawashima-Ohya Y."/>
            <person name="Watanabe K."/>
            <person name="Yamazaki M."/>
            <person name="Kanehori K."/>
            <person name="Kawamoto T."/>
            <person name="Nunoshiba T."/>
            <person name="Yamamoto Y."/>
            <person name="Aramaki H."/>
            <person name="Makino K."/>
            <person name="Suzuki M."/>
        </authorList>
    </citation>
    <scope>NUCLEOTIDE SEQUENCE [LARGE SCALE GENOMIC DNA]</scope>
    <source>
        <strain>ATCC 51530 / DSM 4299 / JCM 9571 / NBRC 15438 / GSS1</strain>
    </source>
</reference>
<gene>
    <name evidence="1" type="primary">serS</name>
    <name type="ordered locus">TV1017</name>
    <name type="ORF">TVG1039759</name>
</gene>